<protein>
    <recommendedName>
        <fullName evidence="1">Small ribosomal subunit protein uS3</fullName>
    </recommendedName>
    <alternativeName>
        <fullName evidence="2">30S ribosomal protein S3</fullName>
    </alternativeName>
</protein>
<accession>B9MKH5</accession>
<keyword id="KW-0687">Ribonucleoprotein</keyword>
<keyword id="KW-0689">Ribosomal protein</keyword>
<keyword id="KW-0694">RNA-binding</keyword>
<keyword id="KW-0699">rRNA-binding</keyword>
<gene>
    <name evidence="1" type="primary">rpsC</name>
    <name type="ordered locus">Athe_1739</name>
</gene>
<reference key="1">
    <citation type="submission" date="2009-01" db="EMBL/GenBank/DDBJ databases">
        <title>Complete sequence of chromosome of Caldicellulosiruptor becscii DSM 6725.</title>
        <authorList>
            <person name="Lucas S."/>
            <person name="Copeland A."/>
            <person name="Lapidus A."/>
            <person name="Glavina del Rio T."/>
            <person name="Tice H."/>
            <person name="Bruce D."/>
            <person name="Goodwin L."/>
            <person name="Pitluck S."/>
            <person name="Sims D."/>
            <person name="Meincke L."/>
            <person name="Brettin T."/>
            <person name="Detter J.C."/>
            <person name="Han C."/>
            <person name="Larimer F."/>
            <person name="Land M."/>
            <person name="Hauser L."/>
            <person name="Kyrpides N."/>
            <person name="Ovchinnikova G."/>
            <person name="Kataeva I."/>
            <person name="Adams M.W.W."/>
        </authorList>
    </citation>
    <scope>NUCLEOTIDE SEQUENCE [LARGE SCALE GENOMIC DNA]</scope>
    <source>
        <strain>ATCC BAA-1888 / DSM 6725 / KCTC 15123 / Z-1320</strain>
    </source>
</reference>
<comment type="function">
    <text evidence="1">Binds the lower part of the 30S subunit head. Binds mRNA in the 70S ribosome, positioning it for translation.</text>
</comment>
<comment type="subunit">
    <text evidence="1">Part of the 30S ribosomal subunit. Forms a tight complex with proteins S10 and S14.</text>
</comment>
<comment type="similarity">
    <text evidence="1">Belongs to the universal ribosomal protein uS3 family.</text>
</comment>
<feature type="chain" id="PRO_1000165475" description="Small ribosomal subunit protein uS3">
    <location>
        <begin position="1"/>
        <end position="222"/>
    </location>
</feature>
<feature type="domain" description="KH type-2" evidence="1">
    <location>
        <begin position="39"/>
        <end position="108"/>
    </location>
</feature>
<evidence type="ECO:0000255" key="1">
    <source>
        <dbReference type="HAMAP-Rule" id="MF_01309"/>
    </source>
</evidence>
<evidence type="ECO:0000305" key="2"/>
<proteinExistence type="inferred from homology"/>
<organism>
    <name type="scientific">Caldicellulosiruptor bescii (strain ATCC BAA-1888 / DSM 6725 / KCTC 15123 / Z-1320)</name>
    <name type="common">Anaerocellum thermophilum</name>
    <dbReference type="NCBI Taxonomy" id="521460"/>
    <lineage>
        <taxon>Bacteria</taxon>
        <taxon>Bacillati</taxon>
        <taxon>Bacillota</taxon>
        <taxon>Bacillota incertae sedis</taxon>
        <taxon>Caldicellulosiruptorales</taxon>
        <taxon>Caldicellulosiruptoraceae</taxon>
        <taxon>Caldicellulosiruptor</taxon>
    </lineage>
</organism>
<sequence>MGQKVHPKGFRLGIIRDWDSRWFANDKDFEKYVLEDYKIRRHIKEKLYNAGISRIEIERAAKRVKVIIHTAKPGIVIGRAGSGVEALRKELEKLTGGKTISLDIKEIKVPELDAQLVAENIAAQLEKRVSFRKAMKQAMARALRSGAKGIKTMVSGRLGGADIARTEWYKEGRIPLQTLRADIDYGFAEAHTTYGRIGVKTWIYKGDILPQKAAASEKGGDK</sequence>
<name>RS3_CALBD</name>
<dbReference type="EMBL" id="CP001393">
    <property type="protein sequence ID" value="ACM60833.1"/>
    <property type="molecule type" value="Genomic_DNA"/>
</dbReference>
<dbReference type="RefSeq" id="WP_015908144.1">
    <property type="nucleotide sequence ID" value="NC_012034.1"/>
</dbReference>
<dbReference type="SMR" id="B9MKH5"/>
<dbReference type="STRING" id="521460.Athe_1739"/>
<dbReference type="GeneID" id="31773096"/>
<dbReference type="KEGG" id="ate:Athe_1739"/>
<dbReference type="eggNOG" id="COG0092">
    <property type="taxonomic scope" value="Bacteria"/>
</dbReference>
<dbReference type="HOGENOM" id="CLU_058591_0_2_9"/>
<dbReference type="Proteomes" id="UP000007723">
    <property type="component" value="Chromosome"/>
</dbReference>
<dbReference type="GO" id="GO:0022627">
    <property type="term" value="C:cytosolic small ribosomal subunit"/>
    <property type="evidence" value="ECO:0007669"/>
    <property type="project" value="TreeGrafter"/>
</dbReference>
<dbReference type="GO" id="GO:0003729">
    <property type="term" value="F:mRNA binding"/>
    <property type="evidence" value="ECO:0007669"/>
    <property type="project" value="UniProtKB-UniRule"/>
</dbReference>
<dbReference type="GO" id="GO:0019843">
    <property type="term" value="F:rRNA binding"/>
    <property type="evidence" value="ECO:0007669"/>
    <property type="project" value="UniProtKB-UniRule"/>
</dbReference>
<dbReference type="GO" id="GO:0003735">
    <property type="term" value="F:structural constituent of ribosome"/>
    <property type="evidence" value="ECO:0007669"/>
    <property type="project" value="InterPro"/>
</dbReference>
<dbReference type="GO" id="GO:0006412">
    <property type="term" value="P:translation"/>
    <property type="evidence" value="ECO:0007669"/>
    <property type="project" value="UniProtKB-UniRule"/>
</dbReference>
<dbReference type="CDD" id="cd02412">
    <property type="entry name" value="KH-II_30S_S3"/>
    <property type="match status" value="1"/>
</dbReference>
<dbReference type="FunFam" id="3.30.1140.32:FF:000006">
    <property type="entry name" value="30S ribosomal protein S3"/>
    <property type="match status" value="1"/>
</dbReference>
<dbReference type="FunFam" id="3.30.300.20:FF:000001">
    <property type="entry name" value="30S ribosomal protein S3"/>
    <property type="match status" value="1"/>
</dbReference>
<dbReference type="Gene3D" id="3.30.300.20">
    <property type="match status" value="1"/>
</dbReference>
<dbReference type="Gene3D" id="3.30.1140.32">
    <property type="entry name" value="Ribosomal protein S3, C-terminal domain"/>
    <property type="match status" value="1"/>
</dbReference>
<dbReference type="HAMAP" id="MF_01309_B">
    <property type="entry name" value="Ribosomal_uS3_B"/>
    <property type="match status" value="1"/>
</dbReference>
<dbReference type="InterPro" id="IPR004087">
    <property type="entry name" value="KH_dom"/>
</dbReference>
<dbReference type="InterPro" id="IPR015946">
    <property type="entry name" value="KH_dom-like_a/b"/>
</dbReference>
<dbReference type="InterPro" id="IPR004044">
    <property type="entry name" value="KH_dom_type_2"/>
</dbReference>
<dbReference type="InterPro" id="IPR009019">
    <property type="entry name" value="KH_sf_prok-type"/>
</dbReference>
<dbReference type="InterPro" id="IPR036419">
    <property type="entry name" value="Ribosomal_S3_C_sf"/>
</dbReference>
<dbReference type="InterPro" id="IPR005704">
    <property type="entry name" value="Ribosomal_uS3_bac-typ"/>
</dbReference>
<dbReference type="InterPro" id="IPR001351">
    <property type="entry name" value="Ribosomal_uS3_C"/>
</dbReference>
<dbReference type="InterPro" id="IPR018280">
    <property type="entry name" value="Ribosomal_uS3_CS"/>
</dbReference>
<dbReference type="NCBIfam" id="TIGR01009">
    <property type="entry name" value="rpsC_bact"/>
    <property type="match status" value="1"/>
</dbReference>
<dbReference type="PANTHER" id="PTHR11760">
    <property type="entry name" value="30S/40S RIBOSOMAL PROTEIN S3"/>
    <property type="match status" value="1"/>
</dbReference>
<dbReference type="PANTHER" id="PTHR11760:SF19">
    <property type="entry name" value="SMALL RIBOSOMAL SUBUNIT PROTEIN US3C"/>
    <property type="match status" value="1"/>
</dbReference>
<dbReference type="Pfam" id="PF07650">
    <property type="entry name" value="KH_2"/>
    <property type="match status" value="1"/>
</dbReference>
<dbReference type="Pfam" id="PF00189">
    <property type="entry name" value="Ribosomal_S3_C"/>
    <property type="match status" value="1"/>
</dbReference>
<dbReference type="SMART" id="SM00322">
    <property type="entry name" value="KH"/>
    <property type="match status" value="1"/>
</dbReference>
<dbReference type="SUPFAM" id="SSF54814">
    <property type="entry name" value="Prokaryotic type KH domain (KH-domain type II)"/>
    <property type="match status" value="1"/>
</dbReference>
<dbReference type="SUPFAM" id="SSF54821">
    <property type="entry name" value="Ribosomal protein S3 C-terminal domain"/>
    <property type="match status" value="1"/>
</dbReference>
<dbReference type="PROSITE" id="PS50823">
    <property type="entry name" value="KH_TYPE_2"/>
    <property type="match status" value="1"/>
</dbReference>
<dbReference type="PROSITE" id="PS00548">
    <property type="entry name" value="RIBOSOMAL_S3"/>
    <property type="match status" value="1"/>
</dbReference>